<feature type="chain" id="PRO_1000050704" description="Large ribosomal subunit protein bL35">
    <location>
        <begin position="1"/>
        <end position="66"/>
    </location>
</feature>
<feature type="region of interest" description="Disordered" evidence="2">
    <location>
        <begin position="1"/>
        <end position="50"/>
    </location>
</feature>
<feature type="compositionally biased region" description="Basic residues" evidence="2">
    <location>
        <begin position="1"/>
        <end position="46"/>
    </location>
</feature>
<name>RL35_LACDB</name>
<accession>Q049G2</accession>
<protein>
    <recommendedName>
        <fullName evidence="1">Large ribosomal subunit protein bL35</fullName>
    </recommendedName>
    <alternativeName>
        <fullName evidence="3">50S ribosomal protein L35</fullName>
    </alternativeName>
</protein>
<reference key="1">
    <citation type="journal article" date="2006" name="Proc. Natl. Acad. Sci. U.S.A.">
        <title>Comparative genomics of the lactic acid bacteria.</title>
        <authorList>
            <person name="Makarova K.S."/>
            <person name="Slesarev A."/>
            <person name="Wolf Y.I."/>
            <person name="Sorokin A."/>
            <person name="Mirkin B."/>
            <person name="Koonin E.V."/>
            <person name="Pavlov A."/>
            <person name="Pavlova N."/>
            <person name="Karamychev V."/>
            <person name="Polouchine N."/>
            <person name="Shakhova V."/>
            <person name="Grigoriev I."/>
            <person name="Lou Y."/>
            <person name="Rohksar D."/>
            <person name="Lucas S."/>
            <person name="Huang K."/>
            <person name="Goodstein D.M."/>
            <person name="Hawkins T."/>
            <person name="Plengvidhya V."/>
            <person name="Welker D."/>
            <person name="Hughes J."/>
            <person name="Goh Y."/>
            <person name="Benson A."/>
            <person name="Baldwin K."/>
            <person name="Lee J.-H."/>
            <person name="Diaz-Muniz I."/>
            <person name="Dosti B."/>
            <person name="Smeianov V."/>
            <person name="Wechter W."/>
            <person name="Barabote R."/>
            <person name="Lorca G."/>
            <person name="Altermann E."/>
            <person name="Barrangou R."/>
            <person name="Ganesan B."/>
            <person name="Xie Y."/>
            <person name="Rawsthorne H."/>
            <person name="Tamir D."/>
            <person name="Parker C."/>
            <person name="Breidt F."/>
            <person name="Broadbent J.R."/>
            <person name="Hutkins R."/>
            <person name="O'Sullivan D."/>
            <person name="Steele J."/>
            <person name="Unlu G."/>
            <person name="Saier M.H. Jr."/>
            <person name="Klaenhammer T."/>
            <person name="Richardson P."/>
            <person name="Kozyavkin S."/>
            <person name="Weimer B.C."/>
            <person name="Mills D.A."/>
        </authorList>
    </citation>
    <scope>NUCLEOTIDE SEQUENCE [LARGE SCALE GENOMIC DNA]</scope>
    <source>
        <strain>ATCC BAA-365 / Lb-18</strain>
    </source>
</reference>
<proteinExistence type="inferred from homology"/>
<keyword id="KW-0687">Ribonucleoprotein</keyword>
<keyword id="KW-0689">Ribosomal protein</keyword>
<organism>
    <name type="scientific">Lactobacillus delbrueckii subsp. bulgaricus (strain ATCC BAA-365 / Lb-18)</name>
    <dbReference type="NCBI Taxonomy" id="321956"/>
    <lineage>
        <taxon>Bacteria</taxon>
        <taxon>Bacillati</taxon>
        <taxon>Bacillota</taxon>
        <taxon>Bacilli</taxon>
        <taxon>Lactobacillales</taxon>
        <taxon>Lactobacillaceae</taxon>
        <taxon>Lactobacillus</taxon>
    </lineage>
</organism>
<comment type="similarity">
    <text evidence="1">Belongs to the bacterial ribosomal protein bL35 family.</text>
</comment>
<gene>
    <name evidence="1" type="primary">rpmI</name>
    <name type="ordered locus">LBUL_1397</name>
</gene>
<evidence type="ECO:0000255" key="1">
    <source>
        <dbReference type="HAMAP-Rule" id="MF_00514"/>
    </source>
</evidence>
<evidence type="ECO:0000256" key="2">
    <source>
        <dbReference type="SAM" id="MobiDB-lite"/>
    </source>
</evidence>
<evidence type="ECO:0000305" key="3"/>
<dbReference type="EMBL" id="CP000412">
    <property type="protein sequence ID" value="ABJ58910.1"/>
    <property type="molecule type" value="Genomic_DNA"/>
</dbReference>
<dbReference type="RefSeq" id="WP_002879235.1">
    <property type="nucleotide sequence ID" value="NC_008529.1"/>
</dbReference>
<dbReference type="SMR" id="Q049G2"/>
<dbReference type="GeneID" id="69669305"/>
<dbReference type="KEGG" id="lbu:LBUL_1397"/>
<dbReference type="HOGENOM" id="CLU_169643_3_1_9"/>
<dbReference type="BioCyc" id="LDEL321956:LBUL_RS06575-MONOMER"/>
<dbReference type="GO" id="GO:0022625">
    <property type="term" value="C:cytosolic large ribosomal subunit"/>
    <property type="evidence" value="ECO:0007669"/>
    <property type="project" value="TreeGrafter"/>
</dbReference>
<dbReference type="GO" id="GO:0003735">
    <property type="term" value="F:structural constituent of ribosome"/>
    <property type="evidence" value="ECO:0007669"/>
    <property type="project" value="InterPro"/>
</dbReference>
<dbReference type="GO" id="GO:0006412">
    <property type="term" value="P:translation"/>
    <property type="evidence" value="ECO:0007669"/>
    <property type="project" value="UniProtKB-UniRule"/>
</dbReference>
<dbReference type="FunFam" id="4.10.410.60:FF:000001">
    <property type="entry name" value="50S ribosomal protein L35"/>
    <property type="match status" value="1"/>
</dbReference>
<dbReference type="Gene3D" id="4.10.410.60">
    <property type="match status" value="1"/>
</dbReference>
<dbReference type="HAMAP" id="MF_00514">
    <property type="entry name" value="Ribosomal_bL35"/>
    <property type="match status" value="1"/>
</dbReference>
<dbReference type="InterPro" id="IPR001706">
    <property type="entry name" value="Ribosomal_bL35"/>
</dbReference>
<dbReference type="InterPro" id="IPR021137">
    <property type="entry name" value="Ribosomal_bL35-like"/>
</dbReference>
<dbReference type="InterPro" id="IPR018265">
    <property type="entry name" value="Ribosomal_bL35_CS"/>
</dbReference>
<dbReference type="InterPro" id="IPR037229">
    <property type="entry name" value="Ribosomal_bL35_sf"/>
</dbReference>
<dbReference type="NCBIfam" id="TIGR00001">
    <property type="entry name" value="rpmI_bact"/>
    <property type="match status" value="1"/>
</dbReference>
<dbReference type="PANTHER" id="PTHR33343">
    <property type="entry name" value="54S RIBOSOMAL PROTEIN BL35M"/>
    <property type="match status" value="1"/>
</dbReference>
<dbReference type="PANTHER" id="PTHR33343:SF1">
    <property type="entry name" value="LARGE RIBOSOMAL SUBUNIT PROTEIN BL35M"/>
    <property type="match status" value="1"/>
</dbReference>
<dbReference type="Pfam" id="PF01632">
    <property type="entry name" value="Ribosomal_L35p"/>
    <property type="match status" value="1"/>
</dbReference>
<dbReference type="PRINTS" id="PR00064">
    <property type="entry name" value="RIBOSOMALL35"/>
</dbReference>
<dbReference type="SUPFAM" id="SSF143034">
    <property type="entry name" value="L35p-like"/>
    <property type="match status" value="1"/>
</dbReference>
<dbReference type="PROSITE" id="PS00936">
    <property type="entry name" value="RIBOSOMAL_L35"/>
    <property type="match status" value="1"/>
</dbReference>
<sequence length="66" mass="7835">MPKMKTHRASAKRFKRTGNGGLKRHHAFTGHRFHGKTKKQRRHLRKAAMVSRSDLKRIKQMLSQMR</sequence>